<proteinExistence type="inferred from homology"/>
<dbReference type="EC" id="3.5.4.16" evidence="2"/>
<dbReference type="EMBL" id="CP000738">
    <property type="protein sequence ID" value="ABR59902.1"/>
    <property type="molecule type" value="Genomic_DNA"/>
</dbReference>
<dbReference type="RefSeq" id="WP_011975226.1">
    <property type="nucleotide sequence ID" value="NC_009636.1"/>
</dbReference>
<dbReference type="RefSeq" id="YP_001326737.1">
    <property type="nucleotide sequence ID" value="NC_009636.1"/>
</dbReference>
<dbReference type="SMR" id="A6U8C2"/>
<dbReference type="STRING" id="366394.Smed_1049"/>
<dbReference type="GeneID" id="61612167"/>
<dbReference type="KEGG" id="smd:Smed_1049"/>
<dbReference type="PATRIC" id="fig|366394.8.peg.4172"/>
<dbReference type="eggNOG" id="COG0302">
    <property type="taxonomic scope" value="Bacteria"/>
</dbReference>
<dbReference type="HOGENOM" id="CLU_049768_3_1_5"/>
<dbReference type="OrthoDB" id="9801207at2"/>
<dbReference type="UniPathway" id="UPA00848">
    <property type="reaction ID" value="UER00151"/>
</dbReference>
<dbReference type="Proteomes" id="UP000001108">
    <property type="component" value="Chromosome"/>
</dbReference>
<dbReference type="GO" id="GO:0005737">
    <property type="term" value="C:cytoplasm"/>
    <property type="evidence" value="ECO:0007669"/>
    <property type="project" value="TreeGrafter"/>
</dbReference>
<dbReference type="GO" id="GO:0005525">
    <property type="term" value="F:GTP binding"/>
    <property type="evidence" value="ECO:0007669"/>
    <property type="project" value="UniProtKB-KW"/>
</dbReference>
<dbReference type="GO" id="GO:0003934">
    <property type="term" value="F:GTP cyclohydrolase I activity"/>
    <property type="evidence" value="ECO:0007669"/>
    <property type="project" value="UniProtKB-UniRule"/>
</dbReference>
<dbReference type="GO" id="GO:0008270">
    <property type="term" value="F:zinc ion binding"/>
    <property type="evidence" value="ECO:0007669"/>
    <property type="project" value="UniProtKB-UniRule"/>
</dbReference>
<dbReference type="GO" id="GO:0006730">
    <property type="term" value="P:one-carbon metabolic process"/>
    <property type="evidence" value="ECO:0007669"/>
    <property type="project" value="UniProtKB-UniRule"/>
</dbReference>
<dbReference type="GO" id="GO:0006729">
    <property type="term" value="P:tetrahydrobiopterin biosynthetic process"/>
    <property type="evidence" value="ECO:0007669"/>
    <property type="project" value="TreeGrafter"/>
</dbReference>
<dbReference type="GO" id="GO:0046654">
    <property type="term" value="P:tetrahydrofolate biosynthetic process"/>
    <property type="evidence" value="ECO:0007669"/>
    <property type="project" value="UniProtKB-UniRule"/>
</dbReference>
<dbReference type="FunFam" id="1.10.286.10:FF:000001">
    <property type="entry name" value="GTP cyclohydrolase 1"/>
    <property type="match status" value="1"/>
</dbReference>
<dbReference type="FunFam" id="3.30.1130.10:FF:000001">
    <property type="entry name" value="GTP cyclohydrolase 1"/>
    <property type="match status" value="1"/>
</dbReference>
<dbReference type="Gene3D" id="1.10.286.10">
    <property type="match status" value="1"/>
</dbReference>
<dbReference type="Gene3D" id="3.30.1130.10">
    <property type="match status" value="1"/>
</dbReference>
<dbReference type="HAMAP" id="MF_00223">
    <property type="entry name" value="FolE"/>
    <property type="match status" value="1"/>
</dbReference>
<dbReference type="InterPro" id="IPR043133">
    <property type="entry name" value="GTP-CH-I_C/QueF"/>
</dbReference>
<dbReference type="InterPro" id="IPR043134">
    <property type="entry name" value="GTP-CH-I_N"/>
</dbReference>
<dbReference type="InterPro" id="IPR001474">
    <property type="entry name" value="GTP_CycHdrlase_I"/>
</dbReference>
<dbReference type="InterPro" id="IPR018234">
    <property type="entry name" value="GTP_CycHdrlase_I_CS"/>
</dbReference>
<dbReference type="InterPro" id="IPR020602">
    <property type="entry name" value="GTP_CycHdrlase_I_dom"/>
</dbReference>
<dbReference type="NCBIfam" id="TIGR00063">
    <property type="entry name" value="folE"/>
    <property type="match status" value="1"/>
</dbReference>
<dbReference type="NCBIfam" id="NF006825">
    <property type="entry name" value="PRK09347.1-2"/>
    <property type="match status" value="1"/>
</dbReference>
<dbReference type="NCBIfam" id="NF006826">
    <property type="entry name" value="PRK09347.1-3"/>
    <property type="match status" value="1"/>
</dbReference>
<dbReference type="PANTHER" id="PTHR11109:SF7">
    <property type="entry name" value="GTP CYCLOHYDROLASE 1"/>
    <property type="match status" value="1"/>
</dbReference>
<dbReference type="PANTHER" id="PTHR11109">
    <property type="entry name" value="GTP CYCLOHYDROLASE I"/>
    <property type="match status" value="1"/>
</dbReference>
<dbReference type="Pfam" id="PF01227">
    <property type="entry name" value="GTP_cyclohydroI"/>
    <property type="match status" value="1"/>
</dbReference>
<dbReference type="SUPFAM" id="SSF55620">
    <property type="entry name" value="Tetrahydrobiopterin biosynthesis enzymes-like"/>
    <property type="match status" value="1"/>
</dbReference>
<dbReference type="PROSITE" id="PS00859">
    <property type="entry name" value="GTP_CYCLOHYDROL_1_1"/>
    <property type="match status" value="1"/>
</dbReference>
<dbReference type="PROSITE" id="PS00860">
    <property type="entry name" value="GTP_CYCLOHYDROL_1_2"/>
    <property type="match status" value="1"/>
</dbReference>
<evidence type="ECO:0000250" key="1"/>
<evidence type="ECO:0000255" key="2">
    <source>
        <dbReference type="HAMAP-Rule" id="MF_00223"/>
    </source>
</evidence>
<keyword id="KW-0342">GTP-binding</keyword>
<keyword id="KW-0378">Hydrolase</keyword>
<keyword id="KW-0479">Metal-binding</keyword>
<keyword id="KW-0547">Nucleotide-binding</keyword>
<keyword id="KW-0554">One-carbon metabolism</keyword>
<keyword id="KW-0862">Zinc</keyword>
<protein>
    <recommendedName>
        <fullName evidence="2">GTP cyclohydrolase 1</fullName>
        <ecNumber evidence="2">3.5.4.16</ecNumber>
    </recommendedName>
    <alternativeName>
        <fullName evidence="2">GTP cyclohydrolase I</fullName>
        <shortName evidence="2">GTP-CH-I</shortName>
    </alternativeName>
</protein>
<reference key="1">
    <citation type="submission" date="2007-06" db="EMBL/GenBank/DDBJ databases">
        <title>Complete sequence of Sinorhizobium medicae WSM419 chromosome.</title>
        <authorList>
            <consortium name="US DOE Joint Genome Institute"/>
            <person name="Copeland A."/>
            <person name="Lucas S."/>
            <person name="Lapidus A."/>
            <person name="Barry K."/>
            <person name="Glavina del Rio T."/>
            <person name="Dalin E."/>
            <person name="Tice H."/>
            <person name="Pitluck S."/>
            <person name="Chain P."/>
            <person name="Malfatti S."/>
            <person name="Shin M."/>
            <person name="Vergez L."/>
            <person name="Schmutz J."/>
            <person name="Larimer F."/>
            <person name="Land M."/>
            <person name="Hauser L."/>
            <person name="Kyrpides N."/>
            <person name="Mikhailova N."/>
            <person name="Reeve W.G."/>
            <person name="Richardson P."/>
        </authorList>
    </citation>
    <scope>NUCLEOTIDE SEQUENCE [LARGE SCALE GENOMIC DNA]</scope>
    <source>
        <strain>WSM419</strain>
    </source>
</reference>
<accession>A6U8C2</accession>
<organism>
    <name type="scientific">Sinorhizobium medicae (strain WSM419)</name>
    <name type="common">Ensifer medicae</name>
    <dbReference type="NCBI Taxonomy" id="366394"/>
    <lineage>
        <taxon>Bacteria</taxon>
        <taxon>Pseudomonadati</taxon>
        <taxon>Pseudomonadota</taxon>
        <taxon>Alphaproteobacteria</taxon>
        <taxon>Hyphomicrobiales</taxon>
        <taxon>Rhizobiaceae</taxon>
        <taxon>Sinorhizobium/Ensifer group</taxon>
        <taxon>Sinorhizobium</taxon>
    </lineage>
</organism>
<gene>
    <name evidence="2" type="primary">folE</name>
    <name type="ordered locus">Smed_1049</name>
</gene>
<name>GCH1_SINMW</name>
<sequence length="205" mass="22901">MDAIVKNFPVLDDTSGRPTQKEAEEAVRVLLRWAGEDPAREGLKDTPARVAKAYREIFGGYDLAAEDVLGRTFEEVSGYDDIVLEKDIPFYSHCEHHMVPIIGKAHIAYLPNGRVLGLSKIARVVDIYARRLQTQEAMTAQIARAIDETLVPRGVAVMIEAEHLCMAMRGIKKQGATTMTTTFTGEFKSEPAEQVRFMTMLRGFK</sequence>
<feature type="chain" id="PRO_1000043742" description="GTP cyclohydrolase 1">
    <location>
        <begin position="1"/>
        <end position="205"/>
    </location>
</feature>
<feature type="binding site" evidence="2">
    <location>
        <position position="94"/>
    </location>
    <ligand>
        <name>Zn(2+)</name>
        <dbReference type="ChEBI" id="CHEBI:29105"/>
    </ligand>
</feature>
<feature type="binding site" evidence="2">
    <location>
        <position position="97"/>
    </location>
    <ligand>
        <name>Zn(2+)</name>
        <dbReference type="ChEBI" id="CHEBI:29105"/>
    </ligand>
</feature>
<feature type="binding site" evidence="2">
    <location>
        <position position="165"/>
    </location>
    <ligand>
        <name>Zn(2+)</name>
        <dbReference type="ChEBI" id="CHEBI:29105"/>
    </ligand>
</feature>
<comment type="catalytic activity">
    <reaction evidence="2">
        <text>GTP + H2O = 7,8-dihydroneopterin 3'-triphosphate + formate + H(+)</text>
        <dbReference type="Rhea" id="RHEA:17473"/>
        <dbReference type="ChEBI" id="CHEBI:15377"/>
        <dbReference type="ChEBI" id="CHEBI:15378"/>
        <dbReference type="ChEBI" id="CHEBI:15740"/>
        <dbReference type="ChEBI" id="CHEBI:37565"/>
        <dbReference type="ChEBI" id="CHEBI:58462"/>
        <dbReference type="EC" id="3.5.4.16"/>
    </reaction>
</comment>
<comment type="pathway">
    <text evidence="2">Cofactor biosynthesis; 7,8-dihydroneopterin triphosphate biosynthesis; 7,8-dihydroneopterin triphosphate from GTP: step 1/1.</text>
</comment>
<comment type="subunit">
    <text evidence="1">Toroid-shaped homodecamer, composed of two pentamers of five dimers.</text>
</comment>
<comment type="similarity">
    <text evidence="2">Belongs to the GTP cyclohydrolase I family.</text>
</comment>